<name>Y397_STAAN</name>
<organism>
    <name type="scientific">Staphylococcus aureus (strain N315)</name>
    <dbReference type="NCBI Taxonomy" id="158879"/>
    <lineage>
        <taxon>Bacteria</taxon>
        <taxon>Bacillati</taxon>
        <taxon>Bacillota</taxon>
        <taxon>Bacilli</taxon>
        <taxon>Bacillales</taxon>
        <taxon>Staphylococcaceae</taxon>
        <taxon>Staphylococcus</taxon>
    </lineage>
</organism>
<proteinExistence type="evidence at protein level"/>
<feature type="signal peptide" evidence="1">
    <location>
        <begin position="1"/>
        <end position="22"/>
    </location>
</feature>
<feature type="chain" id="PRO_0000282143" description="Uncharacterized lipoprotein SA0397">
    <location>
        <begin position="23"/>
        <end position="264"/>
    </location>
</feature>
<feature type="lipid moiety-binding region" description="N-palmitoyl cysteine" evidence="1">
    <location>
        <position position="23"/>
    </location>
</feature>
<feature type="lipid moiety-binding region" description="S-diacylglycerol cysteine" evidence="1">
    <location>
        <position position="23"/>
    </location>
</feature>
<protein>
    <recommendedName>
        <fullName>Uncharacterized lipoprotein SA0397</fullName>
    </recommendedName>
</protein>
<gene>
    <name type="primary">lpl2</name>
    <name type="ordered locus">SA0397</name>
</gene>
<reference key="1">
    <citation type="journal article" date="2001" name="Lancet">
        <title>Whole genome sequencing of meticillin-resistant Staphylococcus aureus.</title>
        <authorList>
            <person name="Kuroda M."/>
            <person name="Ohta T."/>
            <person name="Uchiyama I."/>
            <person name="Baba T."/>
            <person name="Yuzawa H."/>
            <person name="Kobayashi I."/>
            <person name="Cui L."/>
            <person name="Oguchi A."/>
            <person name="Aoki K."/>
            <person name="Nagai Y."/>
            <person name="Lian J.-Q."/>
            <person name="Ito T."/>
            <person name="Kanamori M."/>
            <person name="Matsumaru H."/>
            <person name="Maruyama A."/>
            <person name="Murakami H."/>
            <person name="Hosoyama A."/>
            <person name="Mizutani-Ui Y."/>
            <person name="Takahashi N.K."/>
            <person name="Sawano T."/>
            <person name="Inoue R."/>
            <person name="Kaito C."/>
            <person name="Sekimizu K."/>
            <person name="Hirakawa H."/>
            <person name="Kuhara S."/>
            <person name="Goto S."/>
            <person name="Yabuzaki J."/>
            <person name="Kanehisa M."/>
            <person name="Yamashita A."/>
            <person name="Oshima K."/>
            <person name="Furuya K."/>
            <person name="Yoshino C."/>
            <person name="Shiba T."/>
            <person name="Hattori M."/>
            <person name="Ogasawara N."/>
            <person name="Hayashi H."/>
            <person name="Hiramatsu K."/>
        </authorList>
    </citation>
    <scope>NUCLEOTIDE SEQUENCE [LARGE SCALE GENOMIC DNA]</scope>
    <source>
        <strain>N315</strain>
    </source>
</reference>
<reference key="2">
    <citation type="submission" date="2007-10" db="UniProtKB">
        <title>Shotgun proteomic analysis of total and membrane protein extracts of S. aureus strain N315.</title>
        <authorList>
            <person name="Vaezzadeh A.R."/>
            <person name="Deshusses J."/>
            <person name="Lescuyer P."/>
            <person name="Hochstrasser D.F."/>
        </authorList>
    </citation>
    <scope>IDENTIFICATION BY MASS SPECTROMETRY [LARGE SCALE ANALYSIS]</scope>
    <source>
        <strain>N315</strain>
    </source>
</reference>
<sequence length="264" mass="30601">MGYLKKLALFISVIILGIFIIGCDSSSDTAEKAKEDSKEEQIKKSFAKTLDMYPIKNLEDLYDKEGYRDGEFKKGDKGTWTLLTSFSKSNKPGEIDDEGMVLYLNRNTKKATGYYFVNKIYDDISKNQNEKKYRVELKNNKIILLDNVEDEKLKQKIENFKFFSQYADFKDLKNYQDGSITTNENVPRYEAEYKLNNSDTNVKKLRDIYPITTKKAPILKLHIDGDIKGSSVGYKKIEYKFSKVKDQETTLRDYLNFGPSDEDS</sequence>
<accession>Q7A7G5</accession>
<dbReference type="EMBL" id="BA000018">
    <property type="protein sequence ID" value="BAB41626.1"/>
    <property type="molecule type" value="Genomic_DNA"/>
</dbReference>
<dbReference type="PIR" id="G89808">
    <property type="entry name" value="G89808"/>
</dbReference>
<dbReference type="RefSeq" id="WP_000540879.1">
    <property type="nucleotide sequence ID" value="NC_002745.2"/>
</dbReference>
<dbReference type="SMR" id="Q7A7G5"/>
<dbReference type="EnsemblBacteria" id="BAB41626">
    <property type="protein sequence ID" value="BAB41626"/>
    <property type="gene ID" value="BAB41626"/>
</dbReference>
<dbReference type="KEGG" id="sau:SA0397"/>
<dbReference type="HOGENOM" id="CLU_071589_0_1_9"/>
<dbReference type="GO" id="GO:0005886">
    <property type="term" value="C:plasma membrane"/>
    <property type="evidence" value="ECO:0007669"/>
    <property type="project" value="UniProtKB-SubCell"/>
</dbReference>
<dbReference type="Gene3D" id="2.50.20.40">
    <property type="match status" value="1"/>
</dbReference>
<dbReference type="InterPro" id="IPR007595">
    <property type="entry name" value="Csa"/>
</dbReference>
<dbReference type="InterPro" id="IPR038641">
    <property type="entry name" value="Csa_sf"/>
</dbReference>
<dbReference type="NCBIfam" id="TIGR01742">
    <property type="entry name" value="SA_tandem_lipo"/>
    <property type="match status" value="1"/>
</dbReference>
<dbReference type="Pfam" id="PF04507">
    <property type="entry name" value="DUF576"/>
    <property type="match status" value="1"/>
</dbReference>
<dbReference type="PROSITE" id="PS51257">
    <property type="entry name" value="PROKAR_LIPOPROTEIN"/>
    <property type="match status" value="1"/>
</dbReference>
<evidence type="ECO:0000255" key="1">
    <source>
        <dbReference type="PROSITE-ProRule" id="PRU00303"/>
    </source>
</evidence>
<evidence type="ECO:0000305" key="2"/>
<comment type="subcellular location">
    <subcellularLocation>
        <location evidence="1">Cell membrane</location>
        <topology evidence="1">Lipid-anchor</topology>
    </subcellularLocation>
</comment>
<comment type="similarity">
    <text evidence="2">Belongs to the staphylococcal tandem lipoprotein family.</text>
</comment>
<keyword id="KW-1003">Cell membrane</keyword>
<keyword id="KW-0449">Lipoprotein</keyword>
<keyword id="KW-0472">Membrane</keyword>
<keyword id="KW-0564">Palmitate</keyword>
<keyword id="KW-0732">Signal</keyword>